<accession>Q8XBP8</accession>
<proteinExistence type="inferred from homology"/>
<name>PTFC_ECO57</name>
<reference key="1">
    <citation type="journal article" date="2001" name="Nature">
        <title>Genome sequence of enterohaemorrhagic Escherichia coli O157:H7.</title>
        <authorList>
            <person name="Perna N.T."/>
            <person name="Plunkett G. III"/>
            <person name="Burland V."/>
            <person name="Mau B."/>
            <person name="Glasner J.D."/>
            <person name="Rose D.J."/>
            <person name="Mayhew G.F."/>
            <person name="Evans P.S."/>
            <person name="Gregor J."/>
            <person name="Kirkpatrick H.A."/>
            <person name="Posfai G."/>
            <person name="Hackett J."/>
            <person name="Klink S."/>
            <person name="Boutin A."/>
            <person name="Shao Y."/>
            <person name="Miller L."/>
            <person name="Grotbeck E.J."/>
            <person name="Davis N.W."/>
            <person name="Lim A."/>
            <person name="Dimalanta E.T."/>
            <person name="Potamousis K."/>
            <person name="Apodaca J."/>
            <person name="Anantharaman T.S."/>
            <person name="Lin J."/>
            <person name="Yen G."/>
            <person name="Schwartz D.C."/>
            <person name="Welch R.A."/>
            <person name="Blattner F.R."/>
        </authorList>
    </citation>
    <scope>NUCLEOTIDE SEQUENCE [LARGE SCALE GENOMIC DNA]</scope>
    <source>
        <strain>O157:H7 / EDL933 / ATCC 700927 / EHEC</strain>
    </source>
</reference>
<reference key="2">
    <citation type="journal article" date="2001" name="DNA Res.">
        <title>Complete genome sequence of enterohemorrhagic Escherichia coli O157:H7 and genomic comparison with a laboratory strain K-12.</title>
        <authorList>
            <person name="Hayashi T."/>
            <person name="Makino K."/>
            <person name="Ohnishi M."/>
            <person name="Kurokawa K."/>
            <person name="Ishii K."/>
            <person name="Yokoyama K."/>
            <person name="Han C.-G."/>
            <person name="Ohtsubo E."/>
            <person name="Nakayama K."/>
            <person name="Murata T."/>
            <person name="Tanaka M."/>
            <person name="Tobe T."/>
            <person name="Iida T."/>
            <person name="Takami H."/>
            <person name="Honda T."/>
            <person name="Sasakawa C."/>
            <person name="Ogasawara N."/>
            <person name="Yasunaga T."/>
            <person name="Kuhara S."/>
            <person name="Shiba T."/>
            <person name="Hattori M."/>
            <person name="Shinagawa H."/>
        </authorList>
    </citation>
    <scope>NUCLEOTIDE SEQUENCE [LARGE SCALE GENOMIC DNA]</scope>
    <source>
        <strain>O157:H7 / Sakai / RIMD 0509952 / EHEC</strain>
    </source>
</reference>
<sequence>MAIKKRSATVVPGASGAAAAVKNPQASKSSFWGELPQHVMSGISRMVPTLIMGGVILAFSQLIAYSWLKIPAEIGIMDALNSGKFSGFDLSLLKFAWLSQSFGGVLFGFAIPMFAAFVANSIGGKLAFPAGFIGGLMSTQPTQLLNFDPSTMQWATSSPVPSTFIGALIISIVAGYLVKWMNQKIQLPDFLLAFKTTFLLPILSAIFVMLAMYYVITPFGGWINGGIRTVLTAAGEKGALMYAMGIAAATAIDLGGPINKAAGFVAFSFTTDHVLPVTARSIAIVIPPIGLGLATIIDRRLTGKRLFNAQLYPQGKTAMFLAFMGISEGAIPFALESPITAIPSYMVGAIVGSTAAVWLGAVQWFPESAIWAWPLVTNLGVYMAGIALGAVITALMVVFLRLMMFRKGKLLIDSL</sequence>
<keyword id="KW-0997">Cell inner membrane</keyword>
<keyword id="KW-1003">Cell membrane</keyword>
<keyword id="KW-0472">Membrane</keyword>
<keyword id="KW-0597">Phosphoprotein</keyword>
<keyword id="KW-0598">Phosphotransferase system</keyword>
<keyword id="KW-1185">Reference proteome</keyword>
<keyword id="KW-0762">Sugar transport</keyword>
<keyword id="KW-0808">Transferase</keyword>
<keyword id="KW-0812">Transmembrane</keyword>
<keyword id="KW-1133">Transmembrane helix</keyword>
<keyword id="KW-0813">Transport</keyword>
<gene>
    <name type="primary">fryC</name>
    <name type="ordered locus">Z3652</name>
    <name type="ordered locus">ECs3266</name>
</gene>
<comment type="function">
    <text evidence="1">The phosphoenolpyruvate-dependent sugar phosphotransferase system (PTS), a major carbohydrate active -transport system, catalyzes the phosphorylation of incoming sugar substrates concomitant with their translocation across the cell membrane.</text>
</comment>
<comment type="subcellular location">
    <subcellularLocation>
        <location evidence="3">Cell inner membrane</location>
        <topology evidence="3">Multi-pass membrane protein</topology>
    </subcellularLocation>
</comment>
<comment type="domain">
    <text>The EIIC domain forms the PTS system translocation channel and contains the specific substrate-binding site.</text>
</comment>
<feature type="chain" id="PRO_0000186706" description="Fructose-like permease IIC component">
    <location>
        <begin position="1"/>
        <end position="415"/>
    </location>
</feature>
<feature type="topological domain" description="Cytoplasmic" evidence="2">
    <location>
        <begin position="1"/>
        <end position="46"/>
    </location>
</feature>
<feature type="transmembrane region" description="Helical" evidence="3">
    <location>
        <begin position="47"/>
        <end position="67"/>
    </location>
</feature>
<feature type="topological domain" description="Periplasmic" evidence="2">
    <location>
        <begin position="68"/>
        <end position="101"/>
    </location>
</feature>
<feature type="transmembrane region" description="Helical" evidence="3">
    <location>
        <begin position="102"/>
        <end position="122"/>
    </location>
</feature>
<feature type="topological domain" description="Cytoplasmic" evidence="2">
    <location>
        <begin position="123"/>
        <end position="126"/>
    </location>
</feature>
<feature type="transmembrane region" description="Helical" evidence="3">
    <location>
        <begin position="127"/>
        <end position="147"/>
    </location>
</feature>
<feature type="topological domain" description="Periplasmic" evidence="2">
    <location>
        <begin position="148"/>
        <end position="157"/>
    </location>
</feature>
<feature type="transmembrane region" description="Helical" evidence="3">
    <location>
        <begin position="158"/>
        <end position="178"/>
    </location>
</feature>
<feature type="topological domain" description="Cytoplasmic" evidence="2">
    <location>
        <begin position="179"/>
        <end position="197"/>
    </location>
</feature>
<feature type="transmembrane region" description="Helical" evidence="3">
    <location>
        <begin position="198"/>
        <end position="218"/>
    </location>
</feature>
<feature type="topological domain" description="Periplasmic" evidence="2">
    <location>
        <begin position="219"/>
        <end position="237"/>
    </location>
</feature>
<feature type="transmembrane region" description="Helical" evidence="3">
    <location>
        <begin position="238"/>
        <end position="258"/>
    </location>
</feature>
<feature type="topological domain" description="Cytoplasmic" evidence="2">
    <location>
        <begin position="259"/>
        <end position="276"/>
    </location>
</feature>
<feature type="transmembrane region" description="Helical" evidence="3">
    <location>
        <begin position="277"/>
        <end position="297"/>
    </location>
</feature>
<feature type="topological domain" description="Periplasmic" evidence="2">
    <location>
        <begin position="298"/>
        <end position="318"/>
    </location>
</feature>
<feature type="transmembrane region" description="Helical" evidence="3">
    <location>
        <begin position="319"/>
        <end position="339"/>
    </location>
</feature>
<feature type="topological domain" description="Cytoplasmic" evidence="2">
    <location>
        <begin position="340"/>
        <end position="341"/>
    </location>
</feature>
<feature type="transmembrane region" description="Helical" evidence="3">
    <location>
        <begin position="342"/>
        <end position="362"/>
    </location>
</feature>
<feature type="topological domain" description="Periplasmic" evidence="2">
    <location>
        <begin position="363"/>
        <end position="378"/>
    </location>
</feature>
<feature type="transmembrane region" description="Helical" evidence="3">
    <location>
        <begin position="379"/>
        <end position="399"/>
    </location>
</feature>
<feature type="topological domain" description="Cytoplasmic" evidence="2">
    <location>
        <begin position="400"/>
        <end position="415"/>
    </location>
</feature>
<feature type="domain" description="PTS EIIC type-2" evidence="3">
    <location>
        <begin position="35"/>
        <end position="410"/>
    </location>
</feature>
<protein>
    <recommendedName>
        <fullName>Fructose-like permease IIC component</fullName>
    </recommendedName>
    <alternativeName>
        <fullName>PTS system fructose-like EIIC component</fullName>
    </alternativeName>
</protein>
<evidence type="ECO:0000250" key="1"/>
<evidence type="ECO:0000255" key="2"/>
<evidence type="ECO:0000255" key="3">
    <source>
        <dbReference type="PROSITE-ProRule" id="PRU00427"/>
    </source>
</evidence>
<organism>
    <name type="scientific">Escherichia coli O157:H7</name>
    <dbReference type="NCBI Taxonomy" id="83334"/>
    <lineage>
        <taxon>Bacteria</taxon>
        <taxon>Pseudomonadati</taxon>
        <taxon>Pseudomonadota</taxon>
        <taxon>Gammaproteobacteria</taxon>
        <taxon>Enterobacterales</taxon>
        <taxon>Enterobacteriaceae</taxon>
        <taxon>Escherichia</taxon>
    </lineage>
</organism>
<dbReference type="EMBL" id="AE005174">
    <property type="protein sequence ID" value="AAG57512.1"/>
    <property type="molecule type" value="Genomic_DNA"/>
</dbReference>
<dbReference type="EMBL" id="BA000007">
    <property type="protein sequence ID" value="BAB36689.1"/>
    <property type="molecule type" value="Genomic_DNA"/>
</dbReference>
<dbReference type="PIR" id="B91037">
    <property type="entry name" value="B91037"/>
</dbReference>
<dbReference type="PIR" id="D85881">
    <property type="entry name" value="D85881"/>
</dbReference>
<dbReference type="RefSeq" id="NP_311293.1">
    <property type="nucleotide sequence ID" value="NC_002695.1"/>
</dbReference>
<dbReference type="RefSeq" id="WP_000985336.1">
    <property type="nucleotide sequence ID" value="NZ_VOAI01000001.1"/>
</dbReference>
<dbReference type="STRING" id="155864.Z3652"/>
<dbReference type="GeneID" id="915632"/>
<dbReference type="KEGG" id="ece:Z3652"/>
<dbReference type="KEGG" id="ecs:ECs_3266"/>
<dbReference type="PATRIC" id="fig|386585.9.peg.3410"/>
<dbReference type="eggNOG" id="COG1299">
    <property type="taxonomic scope" value="Bacteria"/>
</dbReference>
<dbReference type="HOGENOM" id="CLU_013155_0_2_6"/>
<dbReference type="OMA" id="QIMMAAI"/>
<dbReference type="Proteomes" id="UP000000558">
    <property type="component" value="Chromosome"/>
</dbReference>
<dbReference type="Proteomes" id="UP000002519">
    <property type="component" value="Chromosome"/>
</dbReference>
<dbReference type="GO" id="GO:0005886">
    <property type="term" value="C:plasma membrane"/>
    <property type="evidence" value="ECO:0007669"/>
    <property type="project" value="UniProtKB-SubCell"/>
</dbReference>
<dbReference type="GO" id="GO:0008982">
    <property type="term" value="F:protein-N(PI)-phosphohistidine-sugar phosphotransferase activity"/>
    <property type="evidence" value="ECO:0007669"/>
    <property type="project" value="InterPro"/>
</dbReference>
<dbReference type="GO" id="GO:0090563">
    <property type="term" value="F:protein-phosphocysteine-sugar phosphotransferase activity"/>
    <property type="evidence" value="ECO:0007669"/>
    <property type="project" value="TreeGrafter"/>
</dbReference>
<dbReference type="GO" id="GO:0009401">
    <property type="term" value="P:phosphoenolpyruvate-dependent sugar phosphotransferase system"/>
    <property type="evidence" value="ECO:0007669"/>
    <property type="project" value="UniProtKB-KW"/>
</dbReference>
<dbReference type="InterPro" id="IPR050864">
    <property type="entry name" value="Bacterial_PTS_Sugar_Transport"/>
</dbReference>
<dbReference type="InterPro" id="IPR003352">
    <property type="entry name" value="PTS_EIIC"/>
</dbReference>
<dbReference type="InterPro" id="IPR013014">
    <property type="entry name" value="PTS_EIIC_2"/>
</dbReference>
<dbReference type="PANTHER" id="PTHR30505">
    <property type="entry name" value="FRUCTOSE-LIKE PERMEASE"/>
    <property type="match status" value="1"/>
</dbReference>
<dbReference type="PANTHER" id="PTHR30505:SF0">
    <property type="entry name" value="FRUCTOSE-LIKE PTS SYSTEM EIIBC COMPONENT-RELATED"/>
    <property type="match status" value="1"/>
</dbReference>
<dbReference type="Pfam" id="PF02378">
    <property type="entry name" value="PTS_EIIC"/>
    <property type="match status" value="1"/>
</dbReference>
<dbReference type="PROSITE" id="PS51104">
    <property type="entry name" value="PTS_EIIC_TYPE_2"/>
    <property type="match status" value="1"/>
</dbReference>